<protein>
    <recommendedName>
        <fullName>RNA-dependent RNA polymerase</fullName>
        <ecNumber>2.7.7.48</ecNumber>
    </recommendedName>
</protein>
<feature type="chain" id="PRO_0000402474" description="RNA-dependent RNA polymerase">
    <location>
        <begin position="1"/>
        <end position="860"/>
    </location>
</feature>
<feature type="region of interest" description="Disordered" evidence="1">
    <location>
        <begin position="839"/>
        <end position="860"/>
    </location>
</feature>
<feature type="compositionally biased region" description="Basic and acidic residues" evidence="1">
    <location>
        <begin position="846"/>
        <end position="860"/>
    </location>
</feature>
<name>RDRP_OUMVV</name>
<reference key="1">
    <citation type="journal article" date="2009" name="J. Gen. Virol.">
        <title>Molecular characterization of the plant virus genus Ourmiavirus and evidence of inter-kingdom reassortment of viral genome segments as its possible route of origin.</title>
        <authorList>
            <person name="Rastgou M."/>
            <person name="Habibi M.K."/>
            <person name="Izadpanah K."/>
            <person name="Masenga V."/>
            <person name="Milne R.G."/>
            <person name="Wolf Y.I."/>
            <person name="Koonin E.V."/>
            <person name="Turina M."/>
        </authorList>
    </citation>
    <scope>NUCLEOTIDE SEQUENCE [GENOMIC RNA]</scope>
</reference>
<organism>
    <name type="scientific">Ourmia melon virus (isolate Melon/Iran/VE9)</name>
    <name type="common">OuMV</name>
    <dbReference type="NCBI Taxonomy" id="652838"/>
    <lineage>
        <taxon>Viruses</taxon>
        <taxon>Riboviria</taxon>
        <taxon>Orthornavirae</taxon>
        <taxon>Lenarviricota</taxon>
        <taxon>Miaviricetes</taxon>
        <taxon>Ourlivirales</taxon>
        <taxon>Botourmiaviridae</taxon>
        <taxon>Ourmiavirus</taxon>
        <taxon>Ourmia melon virus</taxon>
    </lineage>
</organism>
<accession>B3VML1</accession>
<comment type="function">
    <text evidence="2">RNA-dependent RNA polymerase which replicates the viral genome.</text>
</comment>
<comment type="catalytic activity">
    <reaction>
        <text>RNA(n) + a ribonucleoside 5'-triphosphate = RNA(n+1) + diphosphate</text>
        <dbReference type="Rhea" id="RHEA:21248"/>
        <dbReference type="Rhea" id="RHEA-COMP:14527"/>
        <dbReference type="Rhea" id="RHEA-COMP:17342"/>
        <dbReference type="ChEBI" id="CHEBI:33019"/>
        <dbReference type="ChEBI" id="CHEBI:61557"/>
        <dbReference type="ChEBI" id="CHEBI:140395"/>
        <dbReference type="EC" id="2.7.7.48"/>
    </reaction>
</comment>
<comment type="similarity">
    <text evidence="2">Belongs to the ssRNA positive-strand viruses RNA-directed RNA polymerase family.</text>
</comment>
<organismHost>
    <name type="scientific">Cucumis melo</name>
    <name type="common">Muskmelon</name>
    <dbReference type="NCBI Taxonomy" id="3656"/>
</organismHost>
<sequence>MEPRQELLDPERVREEAKRIVRWLCGLVDRTGKLPAGDYQGKILNTVSEICKRSKLPCGELAEALTKGRLTRSLVDYSELLISNLVVGYFDVLEIYLGKQSVRLSDIREMACKYTFYAINRRLEDYIKFQTAWLQARAMRDVTPEPEAPSWLNEGFGRCFSALLNRKVHLRCVLRARPNDVSLAASLYQVKRVAPPLPDDQIEKNLEKSLDRLTKDEEPAGVDEPFLEDLKRECKRTVDELVQNARREGWNRKISRDCFPSQSAAFENPISKGGQLGQLVKENNTPRLPVLLGMFEYKGRVTPVYGWADDGDTILSDEELGREVPAALKCRRSPVLEPFKVRVITMGPAVQYYRARRVQGCLWDLLKHTRCTHLPNRPVEESDIGFYVRRRGADLFRGEEVPYVSGDYSAATDNLHPDLSLSVVDRVCDHLLSDDNRPLDPVSPWRVLFHRVLVGHRIYDGNSSRNTEVAAQSWGQLMGSPLSFPVLCIVNLAVTRYVLEKACGRIVTLEESGILVNGDDILFRCPERTIPFWTRMVTIAGLSPSPGKNFVSYRYCQLNSELYDMSGSRAEYLPFIKANLIYGTLARGCERKRAADLCYGDTTTEGGTFGHRARALIKGFGPDMQDRLMSRFLHSIKGFLEKIPEVSWFIHPRYGGLGLPLTRPVTHNPYHLRIAAYLSCGGEQSQEARCMMQWLSAPTKSFNAATLLRILEVARNCKVPFRKVPFALLHRAEAAGVDLEALFRKALLRSAPRLGVEYPSNESGDMQRLGDWRRFFRDVGRKAARTRCRSGTADERKGLFLMSPDNAVKGPQYEYIFDWASHNMGGNIWDPSYKFRADPFSSSESDEPRAKEIGPNRGPE</sequence>
<evidence type="ECO:0000256" key="1">
    <source>
        <dbReference type="SAM" id="MobiDB-lite"/>
    </source>
</evidence>
<evidence type="ECO:0000305" key="2"/>
<keyword id="KW-0547">Nucleotide-binding</keyword>
<keyword id="KW-0548">Nucleotidyltransferase</keyword>
<keyword id="KW-1185">Reference proteome</keyword>
<keyword id="KW-0696">RNA-directed RNA polymerase</keyword>
<keyword id="KW-0808">Transferase</keyword>
<keyword id="KW-0693">Viral RNA replication</keyword>
<dbReference type="EC" id="2.7.7.48"/>
<dbReference type="EMBL" id="EU770623">
    <property type="protein sequence ID" value="ACF16360.1"/>
    <property type="molecule type" value="mRNA"/>
</dbReference>
<dbReference type="RefSeq" id="YP_002019757.1">
    <property type="nucleotide sequence ID" value="NC_011068.1"/>
</dbReference>
<dbReference type="GeneID" id="8658756"/>
<dbReference type="KEGG" id="vg:8658756"/>
<dbReference type="Proteomes" id="UP000001103">
    <property type="component" value="Genome"/>
</dbReference>
<dbReference type="GO" id="GO:0000166">
    <property type="term" value="F:nucleotide binding"/>
    <property type="evidence" value="ECO:0007669"/>
    <property type="project" value="UniProtKB-KW"/>
</dbReference>
<dbReference type="GO" id="GO:0003968">
    <property type="term" value="F:RNA-directed RNA polymerase activity"/>
    <property type="evidence" value="ECO:0007669"/>
    <property type="project" value="UniProtKB-KW"/>
</dbReference>
<dbReference type="CDD" id="cd23183">
    <property type="entry name" value="ps-ssRNAv_Botourmiaviridae_RdRp"/>
    <property type="match status" value="1"/>
</dbReference>
<dbReference type="InterPro" id="IPR043502">
    <property type="entry name" value="DNA/RNA_pol_sf"/>
</dbReference>
<dbReference type="SUPFAM" id="SSF56672">
    <property type="entry name" value="DNA/RNA polymerases"/>
    <property type="match status" value="1"/>
</dbReference>
<proteinExistence type="evidence at transcript level"/>